<sequence length="175" mass="20145">MDIAIHHPWIRRPFFPFHSPSRLFDQFFGEHLLESDLFPTSTSLSPFYLRPPSFLRAPSWFDTGLSEMRLEKDRFSVNLDVKHFSPEELKVKVLGDVIEVHGKHEERQDEHGFISREFHRKYRVPADVDPLTITSSLSSDGVLTVNGPRKQVSGPERTIPITREEKPAVTAAPKK</sequence>
<feature type="chain" id="PRO_0000125908" description="Alpha-crystallin B chain">
    <location>
        <begin position="1"/>
        <end position="175"/>
    </location>
</feature>
<feature type="domain" description="sHSP" evidence="6">
    <location>
        <begin position="56"/>
        <end position="164"/>
    </location>
</feature>
<feature type="region of interest" description="Disordered" evidence="7">
    <location>
        <begin position="142"/>
        <end position="175"/>
    </location>
</feature>
<feature type="binding site" evidence="1">
    <location>
        <position position="83"/>
    </location>
    <ligand>
        <name>Zn(2+)</name>
        <dbReference type="ChEBI" id="CHEBI:29105"/>
        <label>1</label>
    </ligand>
</feature>
<feature type="binding site" evidence="1">
    <location>
        <position position="104"/>
    </location>
    <ligand>
        <name>Zn(2+)</name>
        <dbReference type="ChEBI" id="CHEBI:29105"/>
        <label>2</label>
    </ligand>
</feature>
<feature type="binding site" evidence="1">
    <location>
        <position position="106"/>
    </location>
    <ligand>
        <name>Zn(2+)</name>
        <dbReference type="ChEBI" id="CHEBI:29105"/>
        <label>2</label>
    </ligand>
</feature>
<feature type="binding site" evidence="1">
    <location>
        <position position="111"/>
    </location>
    <ligand>
        <name>Zn(2+)</name>
        <dbReference type="ChEBI" id="CHEBI:29105"/>
        <label>1</label>
    </ligand>
</feature>
<feature type="binding site" evidence="1">
    <location>
        <position position="119"/>
    </location>
    <ligand>
        <name>Zn(2+)</name>
        <dbReference type="ChEBI" id="CHEBI:29105"/>
        <label>1</label>
    </ligand>
</feature>
<feature type="modified residue" description="N-acetylmethionine" evidence="2">
    <location>
        <position position="1"/>
    </location>
</feature>
<feature type="modified residue" description="Phosphoserine" evidence="2">
    <location>
        <position position="19"/>
    </location>
</feature>
<feature type="modified residue" description="Phosphoserine" evidence="2">
    <location>
        <position position="45"/>
    </location>
</feature>
<feature type="modified residue" description="Phosphoserine" evidence="2">
    <location>
        <position position="59"/>
    </location>
</feature>
<feature type="modified residue" description="N6-acetyllysine" evidence="3">
    <location>
        <position position="92"/>
    </location>
</feature>
<feature type="modified residue" description="N6-acetyllysine" evidence="3">
    <location>
        <position position="166"/>
    </location>
</feature>
<feature type="glycosylation site" description="O-linked (GlcNAc) serine" evidence="3">
    <location>
        <position position="41"/>
    </location>
</feature>
<feature type="glycosylation site" description="O-linked (GlcNAc) threonine" evidence="5">
    <location>
        <position position="170"/>
    </location>
</feature>
<comment type="function">
    <text evidence="4">May contribute to the transparency and refractive index of the lens. Has chaperone-like activity, preventing aggregation of various proteins under a wide range of stress conditions. In lens epithelial cells, stabilizes the ATP6V1A protein, preventing its degradation by the proteasome (By similarity).</text>
</comment>
<comment type="subunit">
    <text evidence="3 4">Heteromer composed of three CRYAA and one CRYAB subunits. Aggregates with homologous proteins, including the small heat shock protein HSPB1, to form large heteromeric complexes. Inter-subunit bridging via zinc ions enhances stability, which is crucial as there is no protein turn over in the lens. Interacts with HSPBAP1 and TTN/titin. Interacts with TMEM109; in the cellular response to DNA damage. Interacts with DES; binds rapidly during early stages of DES filament assembly and a reduced binding seen in the later stages. Interacts with TMED10; the interaction mediates the translocation from the cytoplasm into the ERGIC (endoplasmic reticulum-Golgi intermediate compartment) and thereby secretion. Interacts with ATP6V1A and with MTOR, forming a ternary complex (By similarity).</text>
</comment>
<comment type="subcellular location">
    <subcellularLocation>
        <location evidence="3">Cytoplasm</location>
    </subcellularLocation>
    <subcellularLocation>
        <location evidence="3">Nucleus</location>
    </subcellularLocation>
    <subcellularLocation>
        <location evidence="3">Secreted</location>
    </subcellularLocation>
    <subcellularLocation>
        <location evidence="4">Lysosome</location>
    </subcellularLocation>
    <text evidence="3">Translocates to the nucleus during heat shock and resides in sub-nuclear structures known as SC35 speckles or nuclear splicing speckles. Localizes at the Z-bands and the intercalated disk in cardiomyocytes. Can be secreted; the secretion is dependent on protein unfolding and facilitated by the cargo receptor TMED10; it results in protein translocation from the cytoplasm into the ERGIC (endoplasmic reticulum-Golgi intermediate compartment) followed by vesicle entry and secretion.</text>
</comment>
<comment type="similarity">
    <text evidence="6">Belongs to the small heat shock protein (HSP20) family.</text>
</comment>
<name>CRYAB_MACFA</name>
<gene>
    <name type="primary">CRYAB</name>
    <name type="ORF">QbsB-10170</name>
</gene>
<accession>Q60HG8</accession>
<evidence type="ECO:0000250" key="1"/>
<evidence type="ECO:0000250" key="2">
    <source>
        <dbReference type="UniProtKB" id="P02510"/>
    </source>
</evidence>
<evidence type="ECO:0000250" key="3">
    <source>
        <dbReference type="UniProtKB" id="P02511"/>
    </source>
</evidence>
<evidence type="ECO:0000250" key="4">
    <source>
        <dbReference type="UniProtKB" id="P23927"/>
    </source>
</evidence>
<evidence type="ECO:0000250" key="5">
    <source>
        <dbReference type="UniProtKB" id="P23928"/>
    </source>
</evidence>
<evidence type="ECO:0000255" key="6">
    <source>
        <dbReference type="PROSITE-ProRule" id="PRU00285"/>
    </source>
</evidence>
<evidence type="ECO:0000256" key="7">
    <source>
        <dbReference type="SAM" id="MobiDB-lite"/>
    </source>
</evidence>
<proteinExistence type="evidence at transcript level"/>
<dbReference type="EMBL" id="AB125159">
    <property type="protein sequence ID" value="BAD51947.1"/>
    <property type="molecule type" value="mRNA"/>
</dbReference>
<dbReference type="RefSeq" id="NP_001271991.1">
    <property type="nucleotide sequence ID" value="NM_001285062.1"/>
</dbReference>
<dbReference type="RefSeq" id="XP_015290834.1">
    <property type="nucleotide sequence ID" value="XM_015435348.1"/>
</dbReference>
<dbReference type="RefSeq" id="XP_015290835.1">
    <property type="nucleotide sequence ID" value="XM_015435349.1"/>
</dbReference>
<dbReference type="RefSeq" id="XP_015290836.1">
    <property type="nucleotide sequence ID" value="XM_015435350.1"/>
</dbReference>
<dbReference type="RefSeq" id="XP_045226974.1">
    <property type="nucleotide sequence ID" value="XM_045371039.2"/>
</dbReference>
<dbReference type="BMRB" id="Q60HG8"/>
<dbReference type="SMR" id="Q60HG8"/>
<dbReference type="STRING" id="9541.ENSMFAP00000035819"/>
<dbReference type="GlyCosmos" id="Q60HG8">
    <property type="glycosylation" value="1 site, No reported glycans"/>
</dbReference>
<dbReference type="GeneID" id="102128339"/>
<dbReference type="VEuPathDB" id="HostDB:ENSMFAG00000034267"/>
<dbReference type="eggNOG" id="KOG3591">
    <property type="taxonomic scope" value="Eukaryota"/>
</dbReference>
<dbReference type="OMA" id="FRDWWED"/>
<dbReference type="Proteomes" id="UP000233100">
    <property type="component" value="Chromosome 14"/>
</dbReference>
<dbReference type="GO" id="GO:0005737">
    <property type="term" value="C:cytoplasm"/>
    <property type="evidence" value="ECO:0000250"/>
    <property type="project" value="UniProtKB"/>
</dbReference>
<dbReference type="GO" id="GO:0005576">
    <property type="term" value="C:extracellular region"/>
    <property type="evidence" value="ECO:0007669"/>
    <property type="project" value="UniProtKB-SubCell"/>
</dbReference>
<dbReference type="GO" id="GO:0005764">
    <property type="term" value="C:lysosome"/>
    <property type="evidence" value="ECO:0007669"/>
    <property type="project" value="UniProtKB-SubCell"/>
</dbReference>
<dbReference type="GO" id="GO:0005634">
    <property type="term" value="C:nucleus"/>
    <property type="evidence" value="ECO:0000250"/>
    <property type="project" value="UniProtKB"/>
</dbReference>
<dbReference type="GO" id="GO:0032991">
    <property type="term" value="C:protein-containing complex"/>
    <property type="evidence" value="ECO:0000250"/>
    <property type="project" value="UniProtKB"/>
</dbReference>
<dbReference type="GO" id="GO:0046872">
    <property type="term" value="F:metal ion binding"/>
    <property type="evidence" value="ECO:0007669"/>
    <property type="project" value="UniProtKB-KW"/>
</dbReference>
<dbReference type="GO" id="GO:0042803">
    <property type="term" value="F:protein homodimerization activity"/>
    <property type="evidence" value="ECO:0000250"/>
    <property type="project" value="UniProtKB"/>
</dbReference>
<dbReference type="GO" id="GO:0005212">
    <property type="term" value="F:structural constituent of eye lens"/>
    <property type="evidence" value="ECO:0007669"/>
    <property type="project" value="UniProtKB-KW"/>
</dbReference>
<dbReference type="GO" id="GO:0051082">
    <property type="term" value="F:unfolded protein binding"/>
    <property type="evidence" value="ECO:0007669"/>
    <property type="project" value="TreeGrafter"/>
</dbReference>
<dbReference type="GO" id="GO:0043066">
    <property type="term" value="P:negative regulation of apoptotic process"/>
    <property type="evidence" value="ECO:0007669"/>
    <property type="project" value="TreeGrafter"/>
</dbReference>
<dbReference type="GO" id="GO:0045892">
    <property type="term" value="P:negative regulation of DNA-templated transcription"/>
    <property type="evidence" value="ECO:0000250"/>
    <property type="project" value="UniProtKB"/>
</dbReference>
<dbReference type="GO" id="GO:0042026">
    <property type="term" value="P:protein refolding"/>
    <property type="evidence" value="ECO:0007669"/>
    <property type="project" value="TreeGrafter"/>
</dbReference>
<dbReference type="GO" id="GO:0009408">
    <property type="term" value="P:response to heat"/>
    <property type="evidence" value="ECO:0007669"/>
    <property type="project" value="TreeGrafter"/>
</dbReference>
<dbReference type="CDD" id="cd06498">
    <property type="entry name" value="ACD_alphaB-crystallin_HspB5"/>
    <property type="match status" value="1"/>
</dbReference>
<dbReference type="FunFam" id="2.60.40.790:FF:000011">
    <property type="entry name" value="Alpha-crystallin B chain"/>
    <property type="match status" value="1"/>
</dbReference>
<dbReference type="Gene3D" id="2.60.40.790">
    <property type="match status" value="1"/>
</dbReference>
<dbReference type="InterPro" id="IPR002068">
    <property type="entry name" value="A-crystallin/Hsp20_dom"/>
</dbReference>
<dbReference type="InterPro" id="IPR037882">
    <property type="entry name" value="ACD_alphaB-crystallin"/>
</dbReference>
<dbReference type="InterPro" id="IPR055269">
    <property type="entry name" value="Alpha-crystallin/HSP_16"/>
</dbReference>
<dbReference type="InterPro" id="IPR001436">
    <property type="entry name" value="Alpha-crystallin/sHSP_animal"/>
</dbReference>
<dbReference type="InterPro" id="IPR003090">
    <property type="entry name" value="Alpha-crystallin_N"/>
</dbReference>
<dbReference type="InterPro" id="IPR008978">
    <property type="entry name" value="HSP20-like_chaperone"/>
</dbReference>
<dbReference type="PANTHER" id="PTHR45640:SF5">
    <property type="entry name" value="ALPHA-CRYSTALLIN B CHAIN"/>
    <property type="match status" value="1"/>
</dbReference>
<dbReference type="PANTHER" id="PTHR45640">
    <property type="entry name" value="HEAT SHOCK PROTEIN HSP-12.2-RELATED"/>
    <property type="match status" value="1"/>
</dbReference>
<dbReference type="Pfam" id="PF00525">
    <property type="entry name" value="Crystallin"/>
    <property type="match status" value="1"/>
</dbReference>
<dbReference type="Pfam" id="PF00011">
    <property type="entry name" value="HSP20"/>
    <property type="match status" value="1"/>
</dbReference>
<dbReference type="PIRSF" id="PIRSF036514">
    <property type="entry name" value="Sm_HSP_B1"/>
    <property type="match status" value="1"/>
</dbReference>
<dbReference type="PRINTS" id="PR00299">
    <property type="entry name" value="ACRYSTALLIN"/>
</dbReference>
<dbReference type="SUPFAM" id="SSF49764">
    <property type="entry name" value="HSP20-like chaperones"/>
    <property type="match status" value="1"/>
</dbReference>
<dbReference type="PROSITE" id="PS01031">
    <property type="entry name" value="SHSP"/>
    <property type="match status" value="1"/>
</dbReference>
<organism>
    <name type="scientific">Macaca fascicularis</name>
    <name type="common">Crab-eating macaque</name>
    <name type="synonym">Cynomolgus monkey</name>
    <dbReference type="NCBI Taxonomy" id="9541"/>
    <lineage>
        <taxon>Eukaryota</taxon>
        <taxon>Metazoa</taxon>
        <taxon>Chordata</taxon>
        <taxon>Craniata</taxon>
        <taxon>Vertebrata</taxon>
        <taxon>Euteleostomi</taxon>
        <taxon>Mammalia</taxon>
        <taxon>Eutheria</taxon>
        <taxon>Euarchontoglires</taxon>
        <taxon>Primates</taxon>
        <taxon>Haplorrhini</taxon>
        <taxon>Catarrhini</taxon>
        <taxon>Cercopithecidae</taxon>
        <taxon>Cercopithecinae</taxon>
        <taxon>Macaca</taxon>
    </lineage>
</organism>
<reference key="1">
    <citation type="submission" date="2003-10" db="EMBL/GenBank/DDBJ databases">
        <title>Isolation and characterization of cDNA for macaque neurological disease genes.</title>
        <authorList>
            <person name="Kusuda J."/>
            <person name="Osada N."/>
            <person name="Tanuma R."/>
            <person name="Hirata M."/>
            <person name="Sugano S."/>
            <person name="Hashimoto K."/>
        </authorList>
    </citation>
    <scope>NUCLEOTIDE SEQUENCE [LARGE SCALE MRNA]</scope>
    <source>
        <tissue>Brain stem</tissue>
    </source>
</reference>
<protein>
    <recommendedName>
        <fullName>Alpha-crystallin B chain</fullName>
    </recommendedName>
    <alternativeName>
        <fullName>Alpha(B)-crystallin</fullName>
    </alternativeName>
</protein>
<keyword id="KW-0007">Acetylation</keyword>
<keyword id="KW-0143">Chaperone</keyword>
<keyword id="KW-0963">Cytoplasm</keyword>
<keyword id="KW-0273">Eye lens protein</keyword>
<keyword id="KW-0325">Glycoprotein</keyword>
<keyword id="KW-0458">Lysosome</keyword>
<keyword id="KW-0479">Metal-binding</keyword>
<keyword id="KW-0488">Methylation</keyword>
<keyword id="KW-0539">Nucleus</keyword>
<keyword id="KW-0597">Phosphoprotein</keyword>
<keyword id="KW-1185">Reference proteome</keyword>
<keyword id="KW-0964">Secreted</keyword>
<keyword id="KW-0862">Zinc</keyword>